<feature type="chain" id="PRO_0000391272" description="NAD(P)H-quinone oxidoreductase subunit 2 B, chloroplastic">
    <location>
        <begin position="1"/>
        <end position="510"/>
    </location>
</feature>
<feature type="transmembrane region" description="Helical" evidence="1">
    <location>
        <begin position="24"/>
        <end position="44"/>
    </location>
</feature>
<feature type="transmembrane region" description="Helical" evidence="1">
    <location>
        <begin position="57"/>
        <end position="77"/>
    </location>
</feature>
<feature type="transmembrane region" description="Helical" evidence="1">
    <location>
        <begin position="99"/>
        <end position="119"/>
    </location>
</feature>
<feature type="transmembrane region" description="Helical" evidence="1">
    <location>
        <begin position="124"/>
        <end position="144"/>
    </location>
</feature>
<feature type="transmembrane region" description="Helical" evidence="1">
    <location>
        <begin position="149"/>
        <end position="169"/>
    </location>
</feature>
<feature type="transmembrane region" description="Helical" evidence="1">
    <location>
        <begin position="183"/>
        <end position="203"/>
    </location>
</feature>
<feature type="transmembrane region" description="Helical" evidence="1">
    <location>
        <begin position="227"/>
        <end position="247"/>
    </location>
</feature>
<feature type="transmembrane region" description="Helical" evidence="1">
    <location>
        <begin position="295"/>
        <end position="315"/>
    </location>
</feature>
<feature type="transmembrane region" description="Helical" evidence="1">
    <location>
        <begin position="323"/>
        <end position="343"/>
    </location>
</feature>
<feature type="transmembrane region" description="Helical" evidence="1">
    <location>
        <begin position="354"/>
        <end position="374"/>
    </location>
</feature>
<feature type="transmembrane region" description="Helical" evidence="1">
    <location>
        <begin position="395"/>
        <end position="415"/>
    </location>
</feature>
<feature type="transmembrane region" description="Helical" evidence="1">
    <location>
        <begin position="418"/>
        <end position="438"/>
    </location>
</feature>
<feature type="transmembrane region" description="Helical" evidence="1">
    <location>
        <begin position="484"/>
        <end position="504"/>
    </location>
</feature>
<keyword id="KW-0150">Chloroplast</keyword>
<keyword id="KW-0472">Membrane</keyword>
<keyword id="KW-0520">NAD</keyword>
<keyword id="KW-0521">NADP</keyword>
<keyword id="KW-0934">Plastid</keyword>
<keyword id="KW-0618">Plastoquinone</keyword>
<keyword id="KW-0874">Quinone</keyword>
<keyword id="KW-0793">Thylakoid</keyword>
<keyword id="KW-1278">Translocase</keyword>
<keyword id="KW-0812">Transmembrane</keyword>
<keyword id="KW-1133">Transmembrane helix</keyword>
<keyword id="KW-0813">Transport</keyword>
<comment type="function">
    <text evidence="1">NDH shuttles electrons from NAD(P)H:plastoquinone, via FMN and iron-sulfur (Fe-S) centers, to quinones in the photosynthetic chain and possibly in a chloroplast respiratory chain. The immediate electron acceptor for the enzyme in this species is believed to be plastoquinone. Couples the redox reaction to proton translocation, and thus conserves the redox energy in a proton gradient.</text>
</comment>
<comment type="catalytic activity">
    <reaction evidence="1">
        <text>a plastoquinone + NADH + (n+1) H(+)(in) = a plastoquinol + NAD(+) + n H(+)(out)</text>
        <dbReference type="Rhea" id="RHEA:42608"/>
        <dbReference type="Rhea" id="RHEA-COMP:9561"/>
        <dbReference type="Rhea" id="RHEA-COMP:9562"/>
        <dbReference type="ChEBI" id="CHEBI:15378"/>
        <dbReference type="ChEBI" id="CHEBI:17757"/>
        <dbReference type="ChEBI" id="CHEBI:57540"/>
        <dbReference type="ChEBI" id="CHEBI:57945"/>
        <dbReference type="ChEBI" id="CHEBI:62192"/>
    </reaction>
</comment>
<comment type="catalytic activity">
    <reaction evidence="1">
        <text>a plastoquinone + NADPH + (n+1) H(+)(in) = a plastoquinol + NADP(+) + n H(+)(out)</text>
        <dbReference type="Rhea" id="RHEA:42612"/>
        <dbReference type="Rhea" id="RHEA-COMP:9561"/>
        <dbReference type="Rhea" id="RHEA-COMP:9562"/>
        <dbReference type="ChEBI" id="CHEBI:15378"/>
        <dbReference type="ChEBI" id="CHEBI:17757"/>
        <dbReference type="ChEBI" id="CHEBI:57783"/>
        <dbReference type="ChEBI" id="CHEBI:58349"/>
        <dbReference type="ChEBI" id="CHEBI:62192"/>
    </reaction>
</comment>
<comment type="subunit">
    <text evidence="1">NDH is composed of at least 16 different subunits, 5 of which are encoded in the nucleus.</text>
</comment>
<comment type="subcellular location">
    <subcellularLocation>
        <location evidence="1">Plastid</location>
        <location evidence="1">Chloroplast thylakoid membrane</location>
        <topology evidence="1">Multi-pass membrane protein</topology>
    </subcellularLocation>
</comment>
<comment type="similarity">
    <text evidence="1">Belongs to the complex I subunit 2 family.</text>
</comment>
<accession>P0CC69</accession>
<accession>B2LMN8</accession>
<name>NU2C2_GUIAB</name>
<dbReference type="EC" id="7.1.1.-" evidence="1"/>
<dbReference type="EMBL" id="EU549769">
    <property type="protein sequence ID" value="ACB86586.1"/>
    <property type="molecule type" value="Genomic_DNA"/>
</dbReference>
<dbReference type="SMR" id="P0CC69"/>
<dbReference type="GO" id="GO:0009535">
    <property type="term" value="C:chloroplast thylakoid membrane"/>
    <property type="evidence" value="ECO:0007669"/>
    <property type="project" value="UniProtKB-SubCell"/>
</dbReference>
<dbReference type="GO" id="GO:0008137">
    <property type="term" value="F:NADH dehydrogenase (ubiquinone) activity"/>
    <property type="evidence" value="ECO:0007669"/>
    <property type="project" value="InterPro"/>
</dbReference>
<dbReference type="GO" id="GO:0048038">
    <property type="term" value="F:quinone binding"/>
    <property type="evidence" value="ECO:0007669"/>
    <property type="project" value="UniProtKB-KW"/>
</dbReference>
<dbReference type="GO" id="GO:0042773">
    <property type="term" value="P:ATP synthesis coupled electron transport"/>
    <property type="evidence" value="ECO:0007669"/>
    <property type="project" value="InterPro"/>
</dbReference>
<dbReference type="GO" id="GO:0019684">
    <property type="term" value="P:photosynthesis, light reaction"/>
    <property type="evidence" value="ECO:0007669"/>
    <property type="project" value="UniProtKB-UniRule"/>
</dbReference>
<dbReference type="HAMAP" id="MF_00445">
    <property type="entry name" value="NDH1_NuoN_1"/>
    <property type="match status" value="1"/>
</dbReference>
<dbReference type="InterPro" id="IPR010096">
    <property type="entry name" value="NADH-Q_OxRdtase_suN/2"/>
</dbReference>
<dbReference type="InterPro" id="IPR001750">
    <property type="entry name" value="ND/Mrp_TM"/>
</dbReference>
<dbReference type="InterPro" id="IPR045693">
    <property type="entry name" value="Ndh2_N"/>
</dbReference>
<dbReference type="NCBIfam" id="TIGR01770">
    <property type="entry name" value="NDH_I_N"/>
    <property type="match status" value="1"/>
</dbReference>
<dbReference type="NCBIfam" id="NF002701">
    <property type="entry name" value="PRK02504.1"/>
    <property type="match status" value="1"/>
</dbReference>
<dbReference type="PANTHER" id="PTHR22773">
    <property type="entry name" value="NADH DEHYDROGENASE"/>
    <property type="match status" value="1"/>
</dbReference>
<dbReference type="Pfam" id="PF19530">
    <property type="entry name" value="Ndh2_N"/>
    <property type="match status" value="1"/>
</dbReference>
<dbReference type="Pfam" id="PF00361">
    <property type="entry name" value="Proton_antipo_M"/>
    <property type="match status" value="1"/>
</dbReference>
<dbReference type="PRINTS" id="PR01434">
    <property type="entry name" value="NADHDHGNASE5"/>
</dbReference>
<geneLocation type="chloroplast"/>
<evidence type="ECO:0000255" key="1">
    <source>
        <dbReference type="HAMAP-Rule" id="MF_00445"/>
    </source>
</evidence>
<reference key="1">
    <citation type="submission" date="2008-03" db="EMBL/GenBank/DDBJ databases">
        <title>Guizotia abyssinica chloroplast sequenced using Solexa.</title>
        <authorList>
            <person name="Kane N.C."/>
            <person name="Dempewolf H."/>
            <person name="Stewart M.L."/>
            <person name="Cronk Q."/>
            <person name="Rieseberrg L.H."/>
        </authorList>
    </citation>
    <scope>NUCLEOTIDE SEQUENCE [LARGE SCALE GENOMIC DNA]</scope>
    <source>
        <strain>cv. PI 508077</strain>
    </source>
</reference>
<proteinExistence type="inferred from homology"/>
<protein>
    <recommendedName>
        <fullName evidence="1">NAD(P)H-quinone oxidoreductase subunit 2 B, chloroplastic</fullName>
        <ecNumber evidence="1">7.1.1.-</ecNumber>
    </recommendedName>
    <alternativeName>
        <fullName evidence="1">NAD(P)H dehydrogenase, subunit 2 B</fullName>
    </alternativeName>
    <alternativeName>
        <fullName evidence="1">NADH-plastoquinone oxidoreductase subunit 2 B</fullName>
    </alternativeName>
</protein>
<organism>
    <name type="scientific">Guizotia abyssinica</name>
    <name type="common">Niger</name>
    <name type="synonym">Ramtilla</name>
    <dbReference type="NCBI Taxonomy" id="4230"/>
    <lineage>
        <taxon>Eukaryota</taxon>
        <taxon>Viridiplantae</taxon>
        <taxon>Streptophyta</taxon>
        <taxon>Embryophyta</taxon>
        <taxon>Tracheophyta</taxon>
        <taxon>Spermatophyta</taxon>
        <taxon>Magnoliopsida</taxon>
        <taxon>eudicotyledons</taxon>
        <taxon>Gunneridae</taxon>
        <taxon>Pentapetalae</taxon>
        <taxon>asterids</taxon>
        <taxon>campanulids</taxon>
        <taxon>Asterales</taxon>
        <taxon>Asteraceae</taxon>
        <taxon>Asteroideae</taxon>
        <taxon>Heliantheae alliance</taxon>
        <taxon>Millerieae</taxon>
        <taxon>Guizotia</taxon>
    </lineage>
</organism>
<gene>
    <name evidence="1" type="primary">ndhB2</name>
    <name type="ordered locus">GuabCp083</name>
</gene>
<sequence>MIWHVQNENFILDSTRIFMKAFHLLFFDGSLIFPECILIFGLILLLMIDSTSDQKDIPWLYFISSTSLVMSITALLFRWREEPMISFSGNFQTNNFNEIFQFLILLCSTLCIPLSVEYIECTEMAITEFLLFVLTATIGGMFLCGANDLITIFVAPECFSLCSYLLSGYTKKDVRSNEATMKYLLMGGASSSILVHGFSWLYGSSGGEIELQEIVNGLINTQMYNSPGISIALIFITVGIGFKLSPAPSHQWTPDVYEGSPTPVVAFLSVTSKVAASASATRIFDIPFYFSSNEWHLLLEILAILSMILGNLIAITQTSMKRMLAYSSIGQIGYVIIGIIVGDSNDGYASMITYMLFYISMNLGTFACIVLFGLRTGTENIRDYAGLYTKDPFLALSLALCLLSLGGLPPLAGFFGKLYLFWCGWQAGLYFLVLIGLLTSVVSIYYYLKIIKLLMTGRNQEITPHVRNYRRSPLRSNNSIELSMIVCVIASTIPGISMNPIIAIAQDTLF</sequence>